<organism>
    <name type="scientific">Citrobacter koseri (strain ATCC BAA-895 / CDC 4225-83 / SGSC4696)</name>
    <dbReference type="NCBI Taxonomy" id="290338"/>
    <lineage>
        <taxon>Bacteria</taxon>
        <taxon>Pseudomonadati</taxon>
        <taxon>Pseudomonadota</taxon>
        <taxon>Gammaproteobacteria</taxon>
        <taxon>Enterobacterales</taxon>
        <taxon>Enterobacteriaceae</taxon>
        <taxon>Citrobacter</taxon>
    </lineage>
</organism>
<evidence type="ECO:0000250" key="1">
    <source>
        <dbReference type="UniProtKB" id="P0AFS3"/>
    </source>
</evidence>
<evidence type="ECO:0000255" key="2">
    <source>
        <dbReference type="PROSITE-ProRule" id="PRU10001"/>
    </source>
</evidence>
<evidence type="ECO:0000305" key="3"/>
<proteinExistence type="inferred from homology"/>
<protein>
    <recommendedName>
        <fullName>Dihydromonapterin reductase</fullName>
        <shortName>H(2)-MPt reductase</shortName>
        <ecNumber evidence="1">1.5.1.50</ecNumber>
    </recommendedName>
    <alternativeName>
        <fullName>Dihydrofolate reductase</fullName>
        <shortName>DHFR</shortName>
        <ecNumber evidence="1">1.5.1.3</ecNumber>
    </alternativeName>
</protein>
<gene>
    <name type="primary">folM</name>
    <name type="ordered locus">CKO_01615</name>
</gene>
<name>FOLM_CITK8</name>
<comment type="function">
    <text evidence="1">Catalyzes the reduction of dihydromonapterin to tetrahydromonapterin. Also has lower activity with dihydrofolate.</text>
</comment>
<comment type="catalytic activity">
    <reaction evidence="1">
        <text>(6S)-5,6,7,8-tetrahydrofolate + NADP(+) = 7,8-dihydrofolate + NADPH + H(+)</text>
        <dbReference type="Rhea" id="RHEA:15009"/>
        <dbReference type="ChEBI" id="CHEBI:15378"/>
        <dbReference type="ChEBI" id="CHEBI:57451"/>
        <dbReference type="ChEBI" id="CHEBI:57453"/>
        <dbReference type="ChEBI" id="CHEBI:57783"/>
        <dbReference type="ChEBI" id="CHEBI:58349"/>
        <dbReference type="EC" id="1.5.1.3"/>
    </reaction>
</comment>
<comment type="catalytic activity">
    <reaction evidence="1">
        <text>7,8-dihydromonapterin + NADPH + H(+) = 5,6,7,8-tetrahydromonapterin + NADP(+)</text>
        <dbReference type="Rhea" id="RHEA:34847"/>
        <dbReference type="ChEBI" id="CHEBI:15378"/>
        <dbReference type="ChEBI" id="CHEBI:57783"/>
        <dbReference type="ChEBI" id="CHEBI:58349"/>
        <dbReference type="ChEBI" id="CHEBI:71175"/>
        <dbReference type="ChEBI" id="CHEBI:71177"/>
        <dbReference type="EC" id="1.5.1.50"/>
    </reaction>
</comment>
<comment type="similarity">
    <text evidence="3">Belongs to the short-chain dehydrogenases/reductases (SDR) family. FolM subfamily.</text>
</comment>
<comment type="sequence caution" evidence="3">
    <conflict type="erroneous initiation">
        <sequence resource="EMBL-CDS" id="ABV12747"/>
    </conflict>
    <text>Extended N-terminus.</text>
</comment>
<accession>A8AGY5</accession>
<sequence>MGKNQPLPILITGGGRRIGLAIAWHFLNQKQPVIVSYRTHYPAIDGLTQAGALCIQADFSTDDGVLAFAEKIKTHTPGLRAILHNASAWMAEAPGTPLSDVLACMMQIHVNTPYLLNHALERLLRGHGHAATDIIHFTDYVVERGSDKHIAYAASKAALDNMTRSFARKLAPEVKVNAIAPSLILFNENDDAEYRQQALNKSLMKTAPGEKEVIDLVDYLLTSCFVTGRSFAVDGGRHLR</sequence>
<feature type="chain" id="PRO_0000339388" description="Dihydromonapterin reductase">
    <location>
        <begin position="1"/>
        <end position="240"/>
    </location>
</feature>
<feature type="active site" description="Proton acceptor" evidence="2">
    <location>
        <position position="152"/>
    </location>
</feature>
<dbReference type="EC" id="1.5.1.50" evidence="1"/>
<dbReference type="EC" id="1.5.1.3" evidence="1"/>
<dbReference type="EMBL" id="CP000822">
    <property type="protein sequence ID" value="ABV12747.1"/>
    <property type="status" value="ALT_INIT"/>
    <property type="molecule type" value="Genomic_DNA"/>
</dbReference>
<dbReference type="RefSeq" id="WP_024130355.1">
    <property type="nucleotide sequence ID" value="NC_009792.1"/>
</dbReference>
<dbReference type="SMR" id="A8AGY5"/>
<dbReference type="STRING" id="290338.CKO_01615"/>
<dbReference type="GeneID" id="45135664"/>
<dbReference type="KEGG" id="cko:CKO_01615"/>
<dbReference type="HOGENOM" id="CLU_010194_1_3_6"/>
<dbReference type="OrthoDB" id="9793499at2"/>
<dbReference type="Proteomes" id="UP000008148">
    <property type="component" value="Chromosome"/>
</dbReference>
<dbReference type="GO" id="GO:0004146">
    <property type="term" value="F:dihydrofolate reductase activity"/>
    <property type="evidence" value="ECO:0007669"/>
    <property type="project" value="UniProtKB-EC"/>
</dbReference>
<dbReference type="GO" id="GO:0006730">
    <property type="term" value="P:one-carbon metabolic process"/>
    <property type="evidence" value="ECO:0007669"/>
    <property type="project" value="UniProtKB-KW"/>
</dbReference>
<dbReference type="CDD" id="cd05357">
    <property type="entry name" value="PR_SDR_c"/>
    <property type="match status" value="1"/>
</dbReference>
<dbReference type="FunFam" id="3.40.50.720:FF:000225">
    <property type="entry name" value="Dihydrofolate reductase FolM"/>
    <property type="match status" value="1"/>
</dbReference>
<dbReference type="Gene3D" id="3.40.50.720">
    <property type="entry name" value="NAD(P)-binding Rossmann-like Domain"/>
    <property type="match status" value="1"/>
</dbReference>
<dbReference type="InterPro" id="IPR036291">
    <property type="entry name" value="NAD(P)-bd_dom_sf"/>
</dbReference>
<dbReference type="InterPro" id="IPR020904">
    <property type="entry name" value="Sc_DH/Rdtase_CS"/>
</dbReference>
<dbReference type="InterPro" id="IPR002347">
    <property type="entry name" value="SDR_fam"/>
</dbReference>
<dbReference type="NCBIfam" id="NF005066">
    <property type="entry name" value="PRK06483.1"/>
    <property type="match status" value="1"/>
</dbReference>
<dbReference type="PANTHER" id="PTHR43639:SF6">
    <property type="entry name" value="DIHYDROMONAPTERIN REDUCTASE"/>
    <property type="match status" value="1"/>
</dbReference>
<dbReference type="PANTHER" id="PTHR43639">
    <property type="entry name" value="OXIDOREDUCTASE, SHORT-CHAIN DEHYDROGENASE/REDUCTASE FAMILY (AFU_ORTHOLOGUE AFUA_5G02870)"/>
    <property type="match status" value="1"/>
</dbReference>
<dbReference type="Pfam" id="PF13561">
    <property type="entry name" value="adh_short_C2"/>
    <property type="match status" value="1"/>
</dbReference>
<dbReference type="PRINTS" id="PR00081">
    <property type="entry name" value="GDHRDH"/>
</dbReference>
<dbReference type="SUPFAM" id="SSF51735">
    <property type="entry name" value="NAD(P)-binding Rossmann-fold domains"/>
    <property type="match status" value="1"/>
</dbReference>
<dbReference type="PROSITE" id="PS00061">
    <property type="entry name" value="ADH_SHORT"/>
    <property type="match status" value="1"/>
</dbReference>
<reference key="1">
    <citation type="submission" date="2007-08" db="EMBL/GenBank/DDBJ databases">
        <authorList>
            <consortium name="The Citrobacter koseri Genome Sequencing Project"/>
            <person name="McClelland M."/>
            <person name="Sanderson E.K."/>
            <person name="Porwollik S."/>
            <person name="Spieth J."/>
            <person name="Clifton W.S."/>
            <person name="Latreille P."/>
            <person name="Courtney L."/>
            <person name="Wang C."/>
            <person name="Pepin K."/>
            <person name="Bhonagiri V."/>
            <person name="Nash W."/>
            <person name="Johnson M."/>
            <person name="Thiruvilangam P."/>
            <person name="Wilson R."/>
        </authorList>
    </citation>
    <scope>NUCLEOTIDE SEQUENCE [LARGE SCALE GENOMIC DNA]</scope>
    <source>
        <strain>ATCC BAA-895 / CDC 4225-83 / SGSC4696</strain>
    </source>
</reference>
<keyword id="KW-0521">NADP</keyword>
<keyword id="KW-0554">One-carbon metabolism</keyword>
<keyword id="KW-0560">Oxidoreductase</keyword>
<keyword id="KW-1185">Reference proteome</keyword>